<evidence type="ECO:0000250" key="1"/>
<evidence type="ECO:0000255" key="2">
    <source>
        <dbReference type="HAMAP-Rule" id="MF_00047"/>
    </source>
</evidence>
<gene>
    <name evidence="2" type="primary">ddl</name>
    <name type="ordered locus">Clim_1529</name>
</gene>
<protein>
    <recommendedName>
        <fullName evidence="2">D-alanine--D-alanine ligase</fullName>
        <ecNumber evidence="2">6.3.2.4</ecNumber>
    </recommendedName>
    <alternativeName>
        <fullName evidence="2">D-Ala-D-Ala ligase</fullName>
    </alternativeName>
    <alternativeName>
        <fullName evidence="2">D-alanylalanine synthetase</fullName>
    </alternativeName>
</protein>
<accession>B3EDF4</accession>
<dbReference type="EC" id="6.3.2.4" evidence="2"/>
<dbReference type="EMBL" id="CP001097">
    <property type="protein sequence ID" value="ACD90579.1"/>
    <property type="molecule type" value="Genomic_DNA"/>
</dbReference>
<dbReference type="RefSeq" id="WP_012466455.1">
    <property type="nucleotide sequence ID" value="NC_010803.1"/>
</dbReference>
<dbReference type="SMR" id="B3EDF4"/>
<dbReference type="STRING" id="290315.Clim_1529"/>
<dbReference type="KEGG" id="cli:Clim_1529"/>
<dbReference type="eggNOG" id="COG1181">
    <property type="taxonomic scope" value="Bacteria"/>
</dbReference>
<dbReference type="HOGENOM" id="CLU_039268_0_0_10"/>
<dbReference type="OrthoDB" id="9813261at2"/>
<dbReference type="UniPathway" id="UPA00219"/>
<dbReference type="Proteomes" id="UP000008841">
    <property type="component" value="Chromosome"/>
</dbReference>
<dbReference type="GO" id="GO:0005829">
    <property type="term" value="C:cytosol"/>
    <property type="evidence" value="ECO:0007669"/>
    <property type="project" value="TreeGrafter"/>
</dbReference>
<dbReference type="GO" id="GO:0005524">
    <property type="term" value="F:ATP binding"/>
    <property type="evidence" value="ECO:0007669"/>
    <property type="project" value="UniProtKB-KW"/>
</dbReference>
<dbReference type="GO" id="GO:0008716">
    <property type="term" value="F:D-alanine-D-alanine ligase activity"/>
    <property type="evidence" value="ECO:0007669"/>
    <property type="project" value="UniProtKB-UniRule"/>
</dbReference>
<dbReference type="GO" id="GO:0046872">
    <property type="term" value="F:metal ion binding"/>
    <property type="evidence" value="ECO:0007669"/>
    <property type="project" value="UniProtKB-KW"/>
</dbReference>
<dbReference type="GO" id="GO:0071555">
    <property type="term" value="P:cell wall organization"/>
    <property type="evidence" value="ECO:0007669"/>
    <property type="project" value="UniProtKB-KW"/>
</dbReference>
<dbReference type="GO" id="GO:0009252">
    <property type="term" value="P:peptidoglycan biosynthetic process"/>
    <property type="evidence" value="ECO:0007669"/>
    <property type="project" value="UniProtKB-UniRule"/>
</dbReference>
<dbReference type="GO" id="GO:0008360">
    <property type="term" value="P:regulation of cell shape"/>
    <property type="evidence" value="ECO:0007669"/>
    <property type="project" value="UniProtKB-KW"/>
</dbReference>
<dbReference type="FunFam" id="3.30.1490.20:FF:000007">
    <property type="entry name" value="D-alanine--D-alanine ligase"/>
    <property type="match status" value="1"/>
</dbReference>
<dbReference type="FunFam" id="3.30.470.20:FF:000008">
    <property type="entry name" value="D-alanine--D-alanine ligase"/>
    <property type="match status" value="1"/>
</dbReference>
<dbReference type="Gene3D" id="3.40.50.20">
    <property type="match status" value="1"/>
</dbReference>
<dbReference type="Gene3D" id="3.30.1490.20">
    <property type="entry name" value="ATP-grasp fold, A domain"/>
    <property type="match status" value="1"/>
</dbReference>
<dbReference type="Gene3D" id="3.30.470.20">
    <property type="entry name" value="ATP-grasp fold, B domain"/>
    <property type="match status" value="1"/>
</dbReference>
<dbReference type="HAMAP" id="MF_00047">
    <property type="entry name" value="Dala_Dala_lig"/>
    <property type="match status" value="1"/>
</dbReference>
<dbReference type="InterPro" id="IPR011761">
    <property type="entry name" value="ATP-grasp"/>
</dbReference>
<dbReference type="InterPro" id="IPR013815">
    <property type="entry name" value="ATP_grasp_subdomain_1"/>
</dbReference>
<dbReference type="InterPro" id="IPR000291">
    <property type="entry name" value="D-Ala_lig_Van_CS"/>
</dbReference>
<dbReference type="InterPro" id="IPR005905">
    <property type="entry name" value="D_ala_D_ala"/>
</dbReference>
<dbReference type="InterPro" id="IPR011095">
    <property type="entry name" value="Dala_Dala_lig_C"/>
</dbReference>
<dbReference type="InterPro" id="IPR011127">
    <property type="entry name" value="Dala_Dala_lig_N"/>
</dbReference>
<dbReference type="InterPro" id="IPR016185">
    <property type="entry name" value="PreATP-grasp_dom_sf"/>
</dbReference>
<dbReference type="NCBIfam" id="TIGR01205">
    <property type="entry name" value="D_ala_D_alaTIGR"/>
    <property type="match status" value="1"/>
</dbReference>
<dbReference type="NCBIfam" id="NF002378">
    <property type="entry name" value="PRK01372.1"/>
    <property type="match status" value="1"/>
</dbReference>
<dbReference type="NCBIfam" id="NF002528">
    <property type="entry name" value="PRK01966.1-4"/>
    <property type="match status" value="1"/>
</dbReference>
<dbReference type="PANTHER" id="PTHR23132">
    <property type="entry name" value="D-ALANINE--D-ALANINE LIGASE"/>
    <property type="match status" value="1"/>
</dbReference>
<dbReference type="PANTHER" id="PTHR23132:SF25">
    <property type="entry name" value="D-ALANINE--D-ALANINE LIGASE A"/>
    <property type="match status" value="1"/>
</dbReference>
<dbReference type="Pfam" id="PF07478">
    <property type="entry name" value="Dala_Dala_lig_C"/>
    <property type="match status" value="1"/>
</dbReference>
<dbReference type="Pfam" id="PF01820">
    <property type="entry name" value="Dala_Dala_lig_N"/>
    <property type="match status" value="1"/>
</dbReference>
<dbReference type="PIRSF" id="PIRSF039102">
    <property type="entry name" value="Ddl/VanB"/>
    <property type="match status" value="1"/>
</dbReference>
<dbReference type="SUPFAM" id="SSF56059">
    <property type="entry name" value="Glutathione synthetase ATP-binding domain-like"/>
    <property type="match status" value="1"/>
</dbReference>
<dbReference type="SUPFAM" id="SSF52440">
    <property type="entry name" value="PreATP-grasp domain"/>
    <property type="match status" value="1"/>
</dbReference>
<dbReference type="PROSITE" id="PS50975">
    <property type="entry name" value="ATP_GRASP"/>
    <property type="match status" value="1"/>
</dbReference>
<dbReference type="PROSITE" id="PS00843">
    <property type="entry name" value="DALA_DALA_LIGASE_1"/>
    <property type="match status" value="1"/>
</dbReference>
<dbReference type="PROSITE" id="PS00844">
    <property type="entry name" value="DALA_DALA_LIGASE_2"/>
    <property type="match status" value="1"/>
</dbReference>
<proteinExistence type="inferred from homology"/>
<organism>
    <name type="scientific">Chlorobium limicola (strain DSM 245 / NBRC 103803 / 6330)</name>
    <dbReference type="NCBI Taxonomy" id="290315"/>
    <lineage>
        <taxon>Bacteria</taxon>
        <taxon>Pseudomonadati</taxon>
        <taxon>Chlorobiota</taxon>
        <taxon>Chlorobiia</taxon>
        <taxon>Chlorobiales</taxon>
        <taxon>Chlorobiaceae</taxon>
        <taxon>Chlorobium/Pelodictyon group</taxon>
        <taxon>Chlorobium</taxon>
    </lineage>
</organism>
<reference key="1">
    <citation type="submission" date="2008-05" db="EMBL/GenBank/DDBJ databases">
        <title>Complete sequence of Chlorobium limicola DSM 245.</title>
        <authorList>
            <consortium name="US DOE Joint Genome Institute"/>
            <person name="Lucas S."/>
            <person name="Copeland A."/>
            <person name="Lapidus A."/>
            <person name="Glavina del Rio T."/>
            <person name="Dalin E."/>
            <person name="Tice H."/>
            <person name="Bruce D."/>
            <person name="Goodwin L."/>
            <person name="Pitluck S."/>
            <person name="Schmutz J."/>
            <person name="Larimer F."/>
            <person name="Land M."/>
            <person name="Hauser L."/>
            <person name="Kyrpides N."/>
            <person name="Ovchinnikova G."/>
            <person name="Zhao F."/>
            <person name="Li T."/>
            <person name="Liu Z."/>
            <person name="Overmann J."/>
            <person name="Bryant D.A."/>
            <person name="Richardson P."/>
        </authorList>
    </citation>
    <scope>NUCLEOTIDE SEQUENCE [LARGE SCALE GENOMIC DNA]</scope>
    <source>
        <strain>DSM 245 / NBRC 103803 / 6330</strain>
    </source>
</reference>
<feature type="chain" id="PRO_1000091169" description="D-alanine--D-alanine ligase">
    <location>
        <begin position="1"/>
        <end position="363"/>
    </location>
</feature>
<feature type="domain" description="ATP-grasp" evidence="2">
    <location>
        <begin position="146"/>
        <end position="352"/>
    </location>
</feature>
<feature type="binding site" evidence="2">
    <location>
        <begin position="179"/>
        <end position="234"/>
    </location>
    <ligand>
        <name>ATP</name>
        <dbReference type="ChEBI" id="CHEBI:30616"/>
    </ligand>
</feature>
<feature type="binding site" evidence="2">
    <location>
        <position position="305"/>
    </location>
    <ligand>
        <name>Mg(2+)</name>
        <dbReference type="ChEBI" id="CHEBI:18420"/>
        <label>1</label>
    </ligand>
</feature>
<feature type="binding site" evidence="2">
    <location>
        <position position="319"/>
    </location>
    <ligand>
        <name>Mg(2+)</name>
        <dbReference type="ChEBI" id="CHEBI:18420"/>
        <label>1</label>
    </ligand>
</feature>
<feature type="binding site" evidence="2">
    <location>
        <position position="319"/>
    </location>
    <ligand>
        <name>Mg(2+)</name>
        <dbReference type="ChEBI" id="CHEBI:18420"/>
        <label>2</label>
    </ligand>
</feature>
<feature type="binding site" evidence="2">
    <location>
        <position position="321"/>
    </location>
    <ligand>
        <name>Mg(2+)</name>
        <dbReference type="ChEBI" id="CHEBI:18420"/>
        <label>2</label>
    </ligand>
</feature>
<name>DDL_CHLL2</name>
<comment type="function">
    <text evidence="2">Cell wall formation.</text>
</comment>
<comment type="catalytic activity">
    <reaction evidence="2">
        <text>2 D-alanine + ATP = D-alanyl-D-alanine + ADP + phosphate + H(+)</text>
        <dbReference type="Rhea" id="RHEA:11224"/>
        <dbReference type="ChEBI" id="CHEBI:15378"/>
        <dbReference type="ChEBI" id="CHEBI:30616"/>
        <dbReference type="ChEBI" id="CHEBI:43474"/>
        <dbReference type="ChEBI" id="CHEBI:57416"/>
        <dbReference type="ChEBI" id="CHEBI:57822"/>
        <dbReference type="ChEBI" id="CHEBI:456216"/>
        <dbReference type="EC" id="6.3.2.4"/>
    </reaction>
</comment>
<comment type="cofactor">
    <cofactor evidence="1">
        <name>Mg(2+)</name>
        <dbReference type="ChEBI" id="CHEBI:18420"/>
    </cofactor>
    <cofactor evidence="1">
        <name>Mn(2+)</name>
        <dbReference type="ChEBI" id="CHEBI:29035"/>
    </cofactor>
    <text evidence="1">Binds 2 magnesium or manganese ions per subunit.</text>
</comment>
<comment type="pathway">
    <text evidence="2">Cell wall biogenesis; peptidoglycan biosynthesis.</text>
</comment>
<comment type="subcellular location">
    <subcellularLocation>
        <location evidence="2">Cytoplasm</location>
    </subcellularLocation>
</comment>
<comment type="similarity">
    <text evidence="2">Belongs to the D-alanine--D-alanine ligase family.</text>
</comment>
<keyword id="KW-0067">ATP-binding</keyword>
<keyword id="KW-0133">Cell shape</keyword>
<keyword id="KW-0961">Cell wall biogenesis/degradation</keyword>
<keyword id="KW-0963">Cytoplasm</keyword>
<keyword id="KW-0436">Ligase</keyword>
<keyword id="KW-0460">Magnesium</keyword>
<keyword id="KW-0464">Manganese</keyword>
<keyword id="KW-0479">Metal-binding</keyword>
<keyword id="KW-0547">Nucleotide-binding</keyword>
<keyword id="KW-0573">Peptidoglycan synthesis</keyword>
<sequence>MSKTTIALLFGGKSTEHEISIISARSISGAIDRERYRVVPVYITHEGAWFSGDSAAEILSLDLSSIMRKSSVGNTETLLREMIRNSAEKPFDFNFRAAGIDVVFIALHGSYGEDGRVQGLLDTMGIPYTGCGVSASAIAMDKALTKLCAADAGVATAPSITLDADSYLADPEPVHELVDSTFGYPLFVKPASLGSSVGISKVHLPAALPEALKVACSYDRKILVEAAVSGKEIEVAVLGNDRPVASVPGEVEPGSDFYDFQDKYIHNTAKTFIPARLPDKLLDSVRCSAITVYKALGCRGMSRVDFFVNEENGSIVLNEINTIPGFTDISMYPKLFEASGIPFTALIDKLLHYAQEKPEAAGR</sequence>